<dbReference type="EC" id="6.3.2.6" evidence="1"/>
<dbReference type="EMBL" id="CP001100">
    <property type="protein sequence ID" value="ACF13668.1"/>
    <property type="molecule type" value="Genomic_DNA"/>
</dbReference>
<dbReference type="RefSeq" id="WP_012499752.1">
    <property type="nucleotide sequence ID" value="NC_011026.1"/>
</dbReference>
<dbReference type="SMR" id="B3QYX5"/>
<dbReference type="STRING" id="517418.Ctha_1204"/>
<dbReference type="KEGG" id="cts:Ctha_1204"/>
<dbReference type="eggNOG" id="COG0152">
    <property type="taxonomic scope" value="Bacteria"/>
</dbReference>
<dbReference type="HOGENOM" id="CLU_061495_2_0_10"/>
<dbReference type="OrthoDB" id="9801549at2"/>
<dbReference type="UniPathway" id="UPA00074">
    <property type="reaction ID" value="UER00131"/>
</dbReference>
<dbReference type="Proteomes" id="UP000001208">
    <property type="component" value="Chromosome"/>
</dbReference>
<dbReference type="GO" id="GO:0005524">
    <property type="term" value="F:ATP binding"/>
    <property type="evidence" value="ECO:0007669"/>
    <property type="project" value="UniProtKB-KW"/>
</dbReference>
<dbReference type="GO" id="GO:0004639">
    <property type="term" value="F:phosphoribosylaminoimidazolesuccinocarboxamide synthase activity"/>
    <property type="evidence" value="ECO:0007669"/>
    <property type="project" value="UniProtKB-UniRule"/>
</dbReference>
<dbReference type="GO" id="GO:0006189">
    <property type="term" value="P:'de novo' IMP biosynthetic process"/>
    <property type="evidence" value="ECO:0007669"/>
    <property type="project" value="UniProtKB-UniRule"/>
</dbReference>
<dbReference type="GO" id="GO:0009236">
    <property type="term" value="P:cobalamin biosynthetic process"/>
    <property type="evidence" value="ECO:0007669"/>
    <property type="project" value="InterPro"/>
</dbReference>
<dbReference type="CDD" id="cd01415">
    <property type="entry name" value="SAICAR_synt_PurC"/>
    <property type="match status" value="1"/>
</dbReference>
<dbReference type="FunFam" id="3.30.470.20:FF:000006">
    <property type="entry name" value="Phosphoribosylaminoimidazole-succinocarboxamide synthase"/>
    <property type="match status" value="1"/>
</dbReference>
<dbReference type="Gene3D" id="3.30.470.20">
    <property type="entry name" value="ATP-grasp fold, B domain"/>
    <property type="match status" value="1"/>
</dbReference>
<dbReference type="Gene3D" id="3.30.200.20">
    <property type="entry name" value="Phosphorylase Kinase, domain 1"/>
    <property type="match status" value="1"/>
</dbReference>
<dbReference type="HAMAP" id="MF_00137">
    <property type="entry name" value="SAICAR_synth"/>
    <property type="match status" value="1"/>
</dbReference>
<dbReference type="InterPro" id="IPR028923">
    <property type="entry name" value="SAICAR_synt/ADE2_N"/>
</dbReference>
<dbReference type="InterPro" id="IPR033934">
    <property type="entry name" value="SAICAR_synt_PurC"/>
</dbReference>
<dbReference type="InterPro" id="IPR001636">
    <property type="entry name" value="SAICAR_synth"/>
</dbReference>
<dbReference type="InterPro" id="IPR050089">
    <property type="entry name" value="SAICAR_synthetase"/>
</dbReference>
<dbReference type="InterPro" id="IPR018236">
    <property type="entry name" value="SAICAR_synthetase_CS"/>
</dbReference>
<dbReference type="NCBIfam" id="TIGR00081">
    <property type="entry name" value="purC"/>
    <property type="match status" value="1"/>
</dbReference>
<dbReference type="PANTHER" id="PTHR43599">
    <property type="entry name" value="MULTIFUNCTIONAL PROTEIN ADE2"/>
    <property type="match status" value="1"/>
</dbReference>
<dbReference type="PANTHER" id="PTHR43599:SF3">
    <property type="entry name" value="SI:DKEY-6E2.2"/>
    <property type="match status" value="1"/>
</dbReference>
<dbReference type="Pfam" id="PF01259">
    <property type="entry name" value="SAICAR_synt"/>
    <property type="match status" value="1"/>
</dbReference>
<dbReference type="SUPFAM" id="SSF56104">
    <property type="entry name" value="SAICAR synthase-like"/>
    <property type="match status" value="1"/>
</dbReference>
<dbReference type="PROSITE" id="PS01058">
    <property type="entry name" value="SAICAR_SYNTHETASE_2"/>
    <property type="match status" value="1"/>
</dbReference>
<feature type="chain" id="PRO_1000095972" description="Phosphoribosylaminoimidazole-succinocarboxamide synthase">
    <location>
        <begin position="1"/>
        <end position="235"/>
    </location>
</feature>
<sequence length="235" mass="26353">MKKGNMIYEGKAKKIFATDNPDLVIQEFKDDASAFNALKKGTILGKGVVNNEVSCHLFSHLAGLGIENHFVEKLSEREMLCKKLEIIKAEVVMRNIAAGSLVKRYGLQEAQVLPFPIAELYLKDDALGDPLMNDAHAVAMGIASAEEIQFVKQEASKVNAALQVFFLERGLKLVDFKLEFGRHNGKILLGDEISPDTCRLWDAETMKKLDKDRFRFDLGDVEEAYIEVRHRVLGN</sequence>
<keyword id="KW-0067">ATP-binding</keyword>
<keyword id="KW-0436">Ligase</keyword>
<keyword id="KW-0547">Nucleotide-binding</keyword>
<keyword id="KW-0658">Purine biosynthesis</keyword>
<keyword id="KW-1185">Reference proteome</keyword>
<name>PUR7_CHLT3</name>
<organism>
    <name type="scientific">Chloroherpeton thalassium (strain ATCC 35110 / GB-78)</name>
    <dbReference type="NCBI Taxonomy" id="517418"/>
    <lineage>
        <taxon>Bacteria</taxon>
        <taxon>Pseudomonadati</taxon>
        <taxon>Chlorobiota</taxon>
        <taxon>Chlorobiia</taxon>
        <taxon>Chlorobiales</taxon>
        <taxon>Chloroherpetonaceae</taxon>
        <taxon>Chloroherpeton</taxon>
    </lineage>
</organism>
<comment type="catalytic activity">
    <reaction evidence="1">
        <text>5-amino-1-(5-phospho-D-ribosyl)imidazole-4-carboxylate + L-aspartate + ATP = (2S)-2-[5-amino-1-(5-phospho-beta-D-ribosyl)imidazole-4-carboxamido]succinate + ADP + phosphate + 2 H(+)</text>
        <dbReference type="Rhea" id="RHEA:22628"/>
        <dbReference type="ChEBI" id="CHEBI:15378"/>
        <dbReference type="ChEBI" id="CHEBI:29991"/>
        <dbReference type="ChEBI" id="CHEBI:30616"/>
        <dbReference type="ChEBI" id="CHEBI:43474"/>
        <dbReference type="ChEBI" id="CHEBI:58443"/>
        <dbReference type="ChEBI" id="CHEBI:77657"/>
        <dbReference type="ChEBI" id="CHEBI:456216"/>
        <dbReference type="EC" id="6.3.2.6"/>
    </reaction>
</comment>
<comment type="pathway">
    <text evidence="1">Purine metabolism; IMP biosynthesis via de novo pathway; 5-amino-1-(5-phospho-D-ribosyl)imidazole-4-carboxamide from 5-amino-1-(5-phospho-D-ribosyl)imidazole-4-carboxylate: step 1/2.</text>
</comment>
<comment type="similarity">
    <text evidence="1">Belongs to the SAICAR synthetase family.</text>
</comment>
<proteinExistence type="inferred from homology"/>
<gene>
    <name evidence="1" type="primary">purC</name>
    <name type="ordered locus">Ctha_1204</name>
</gene>
<reference key="1">
    <citation type="submission" date="2008-06" db="EMBL/GenBank/DDBJ databases">
        <title>Complete sequence of Chloroherpeton thalassium ATCC 35110.</title>
        <authorList>
            <consortium name="US DOE Joint Genome Institute"/>
            <person name="Lucas S."/>
            <person name="Copeland A."/>
            <person name="Lapidus A."/>
            <person name="Glavina del Rio T."/>
            <person name="Dalin E."/>
            <person name="Tice H."/>
            <person name="Bruce D."/>
            <person name="Goodwin L."/>
            <person name="Pitluck S."/>
            <person name="Schmutz J."/>
            <person name="Larimer F."/>
            <person name="Land M."/>
            <person name="Hauser L."/>
            <person name="Kyrpides N."/>
            <person name="Mikhailova N."/>
            <person name="Liu Z."/>
            <person name="Li T."/>
            <person name="Zhao F."/>
            <person name="Overmann J."/>
            <person name="Bryant D.A."/>
            <person name="Richardson P."/>
        </authorList>
    </citation>
    <scope>NUCLEOTIDE SEQUENCE [LARGE SCALE GENOMIC DNA]</scope>
    <source>
        <strain>ATCC 35110 / GB-78</strain>
    </source>
</reference>
<accession>B3QYX5</accession>
<protein>
    <recommendedName>
        <fullName evidence="1">Phosphoribosylaminoimidazole-succinocarboxamide synthase</fullName>
        <ecNumber evidence="1">6.3.2.6</ecNumber>
    </recommendedName>
    <alternativeName>
        <fullName evidence="1">SAICAR synthetase</fullName>
    </alternativeName>
</protein>
<evidence type="ECO:0000255" key="1">
    <source>
        <dbReference type="HAMAP-Rule" id="MF_00137"/>
    </source>
</evidence>